<name>PPK3_PACBA</name>
<accession>B3A0K7</accession>
<comment type="function">
    <text evidence="1">Myoactive.</text>
</comment>
<comment type="subcellular location">
    <subcellularLocation>
        <location evidence="6">Secreted</location>
    </subcellularLocation>
</comment>
<comment type="similarity">
    <text evidence="2">Belongs to the pyrokinin family.</text>
</comment>
<organism>
    <name type="scientific">Pachyphasma brandbergense</name>
    <name type="common">Gladiator</name>
    <name type="synonym">Heel-walker</name>
    <dbReference type="NCBI Taxonomy" id="1041430"/>
    <lineage>
        <taxon>Eukaryota</taxon>
        <taxon>Metazoa</taxon>
        <taxon>Ecdysozoa</taxon>
        <taxon>Arthropoda</taxon>
        <taxon>Hexapoda</taxon>
        <taxon>Insecta</taxon>
        <taxon>Pterygota</taxon>
        <taxon>Neoptera</taxon>
        <taxon>Polyneoptera</taxon>
        <taxon>Mantophasmatodea</taxon>
        <taxon>Mantophasmatidae</taxon>
        <taxon>Pachyphasma</taxon>
    </lineage>
</organism>
<evidence type="ECO:0000250" key="1">
    <source>
        <dbReference type="UniProtKB" id="P82619"/>
    </source>
</evidence>
<evidence type="ECO:0000255" key="2"/>
<evidence type="ECO:0000269" key="3">
    <source>
    </source>
</evidence>
<evidence type="ECO:0000303" key="4">
    <source>
    </source>
</evidence>
<evidence type="ECO:0000305" key="5"/>
<evidence type="ECO:0000305" key="6">
    <source>
    </source>
</evidence>
<reference evidence="5" key="1">
    <citation type="journal article" date="2012" name="Syst. Biol.">
        <title>Peptidomics-based phylogeny and biogeography of Mantophasmatodea (Hexapoda).</title>
        <authorList>
            <person name="Predel R."/>
            <person name="Neupert S."/>
            <person name="Huetteroth W."/>
            <person name="Kahnt J."/>
            <person name="Waidelich D."/>
            <person name="Roth S."/>
        </authorList>
    </citation>
    <scope>PROTEIN SEQUENCE</scope>
    <scope>AMIDATION AT MET-8</scope>
    <source>
        <tissue evidence="3">Corpora cardiaca</tissue>
    </source>
</reference>
<sequence>DPPFAPRM</sequence>
<protein>
    <recommendedName>
        <fullName evidence="4">Pyrokinin-3</fullName>
        <shortName evidence="4">PK-3</shortName>
    </recommendedName>
</protein>
<dbReference type="GO" id="GO:0005576">
    <property type="term" value="C:extracellular region"/>
    <property type="evidence" value="ECO:0007669"/>
    <property type="project" value="UniProtKB-SubCell"/>
</dbReference>
<dbReference type="GO" id="GO:0007218">
    <property type="term" value="P:neuropeptide signaling pathway"/>
    <property type="evidence" value="ECO:0007669"/>
    <property type="project" value="UniProtKB-KW"/>
</dbReference>
<keyword id="KW-0027">Amidation</keyword>
<keyword id="KW-0903">Direct protein sequencing</keyword>
<keyword id="KW-0527">Neuropeptide</keyword>
<keyword id="KW-0964">Secreted</keyword>
<feature type="peptide" id="PRO_0000421598" description="Pyrokinin-3" evidence="3">
    <location>
        <begin position="1"/>
        <end position="8"/>
    </location>
</feature>
<feature type="modified residue" description="Methionine amide" evidence="3">
    <location>
        <position position="8"/>
    </location>
</feature>
<proteinExistence type="evidence at protein level"/>